<organism>
    <name type="scientific">Streptomyces lividans</name>
    <dbReference type="NCBI Taxonomy" id="1916"/>
    <lineage>
        <taxon>Bacteria</taxon>
        <taxon>Bacillati</taxon>
        <taxon>Actinomycetota</taxon>
        <taxon>Actinomycetes</taxon>
        <taxon>Kitasatosporales</taxon>
        <taxon>Streptomycetaceae</taxon>
        <taxon>Streptomyces</taxon>
    </lineage>
</organism>
<dbReference type="EMBL" id="X98242">
    <property type="protein sequence ID" value="CAA66898.1"/>
    <property type="molecule type" value="Genomic_DNA"/>
</dbReference>
<dbReference type="SMR" id="P72469"/>
<dbReference type="GO" id="GO:0003700">
    <property type="term" value="F:DNA-binding transcription factor activity"/>
    <property type="evidence" value="ECO:0007669"/>
    <property type="project" value="TreeGrafter"/>
</dbReference>
<dbReference type="GO" id="GO:0000976">
    <property type="term" value="F:transcription cis-regulatory region binding"/>
    <property type="evidence" value="ECO:0007669"/>
    <property type="project" value="TreeGrafter"/>
</dbReference>
<dbReference type="CDD" id="cd01392">
    <property type="entry name" value="HTH_LacI"/>
    <property type="match status" value="1"/>
</dbReference>
<dbReference type="CDD" id="cd06292">
    <property type="entry name" value="PBP1_AglR_RafR-like"/>
    <property type="match status" value="1"/>
</dbReference>
<dbReference type="Gene3D" id="3.40.50.2300">
    <property type="match status" value="2"/>
</dbReference>
<dbReference type="Gene3D" id="1.10.260.40">
    <property type="entry name" value="lambda repressor-like DNA-binding domains"/>
    <property type="match status" value="1"/>
</dbReference>
<dbReference type="InterPro" id="IPR000843">
    <property type="entry name" value="HTH_LacI"/>
</dbReference>
<dbReference type="InterPro" id="IPR046335">
    <property type="entry name" value="LacI/GalR-like_sensor"/>
</dbReference>
<dbReference type="InterPro" id="IPR010982">
    <property type="entry name" value="Lambda_DNA-bd_dom_sf"/>
</dbReference>
<dbReference type="InterPro" id="IPR028082">
    <property type="entry name" value="Peripla_BP_I"/>
</dbReference>
<dbReference type="PANTHER" id="PTHR30146">
    <property type="entry name" value="LACI-RELATED TRANSCRIPTIONAL REPRESSOR"/>
    <property type="match status" value="1"/>
</dbReference>
<dbReference type="PANTHER" id="PTHR30146:SF153">
    <property type="entry name" value="LACTOSE OPERON REPRESSOR"/>
    <property type="match status" value="1"/>
</dbReference>
<dbReference type="Pfam" id="PF00356">
    <property type="entry name" value="LacI"/>
    <property type="match status" value="1"/>
</dbReference>
<dbReference type="Pfam" id="PF13377">
    <property type="entry name" value="Peripla_BP_3"/>
    <property type="match status" value="1"/>
</dbReference>
<dbReference type="PRINTS" id="PR00036">
    <property type="entry name" value="HTHLACI"/>
</dbReference>
<dbReference type="SMART" id="SM00354">
    <property type="entry name" value="HTH_LACI"/>
    <property type="match status" value="1"/>
</dbReference>
<dbReference type="SUPFAM" id="SSF47413">
    <property type="entry name" value="lambda repressor-like DNA-binding domains"/>
    <property type="match status" value="1"/>
</dbReference>
<dbReference type="SUPFAM" id="SSF53822">
    <property type="entry name" value="Periplasmic binding protein-like I"/>
    <property type="match status" value="1"/>
</dbReference>
<dbReference type="PROSITE" id="PS00356">
    <property type="entry name" value="HTH_LACI_1"/>
    <property type="match status" value="1"/>
</dbReference>
<dbReference type="PROSITE" id="PS50932">
    <property type="entry name" value="HTH_LACI_2"/>
    <property type="match status" value="1"/>
</dbReference>
<gene>
    <name type="primary">reg1</name>
</gene>
<name>REG1_STRLI</name>
<reference key="1">
    <citation type="journal article" date="1997" name="J. Bacteriol.">
        <title>Amylase and chitinase genes in Streptomyces lividans are regulated by reg1, a pleiotropic regulatory gene.</title>
        <authorList>
            <person name="Nguyen J."/>
            <person name="Francou F."/>
            <person name="Virolle M.J."/>
            <person name="Guerineau M."/>
        </authorList>
    </citation>
    <scope>NUCLEOTIDE SEQUENCE [GENOMIC DNA]</scope>
    <source>
        <strain>TK24</strain>
    </source>
</reference>
<keyword id="KW-0238">DNA-binding</keyword>
<keyword id="KW-0678">Repressor</keyword>
<keyword id="KW-0804">Transcription</keyword>
<keyword id="KW-0805">Transcription regulation</keyword>
<evidence type="ECO:0000255" key="1">
    <source>
        <dbReference type="PROSITE-ProRule" id="PRU00111"/>
    </source>
</evidence>
<sequence>MTTRLADIAAQAGVSEATVSRVLNGKPGVAATTRQSVLAALDVLGYERPVRLRRRSAGLVGLVTPELENPIFPAFAQVIGQALTRQGYTPVLATQTPGGSTEDELTEMLVDRGVAGIIYVSGLHADTTADMQRYERLGGRGVPFVLVDGFSSQVQAPFISPDDRAAMSLAVTHLVSLGHTRIGLALGPKRFVPVQRKIEGFVRTVQEPVGAERRSTVEKELVQHSLYTLEGGQAAASALIGRDCTAVVCASDMMALGAIRAARQLGLDVPKDVSVVGFDDSPLIAFTDPPLTTVRKPVPAMGQAAVRTLLEEIGGTPAPHSEFVFMPELVVRGSTASAPGERGRP</sequence>
<proteinExistence type="predicted"/>
<protein>
    <recommendedName>
        <fullName>HTH-type transcriptional regulator reg1</fullName>
    </recommendedName>
</protein>
<accession>P72469</accession>
<comment type="function">
    <text>Transcription repressor involved in control of expression of alpha-amylase and chitinase genes and of actinorhodin production.</text>
</comment>
<feature type="chain" id="PRO_0000107995" description="HTH-type transcriptional regulator reg1">
    <location>
        <begin position="1"/>
        <end position="345"/>
    </location>
</feature>
<feature type="domain" description="HTH lacI-type" evidence="1">
    <location>
        <begin position="1"/>
        <end position="58"/>
    </location>
</feature>
<feature type="DNA-binding region" description="H-T-H motif" evidence="1">
    <location>
        <begin position="5"/>
        <end position="24"/>
    </location>
</feature>